<reference key="1">
    <citation type="journal article" date="2007" name="J. Bacteriol.">
        <title>Complete genome of acute rheumatic fever-associated serotype M5 Streptococcus pyogenes strain Manfredo.</title>
        <authorList>
            <person name="Holden M.T.G."/>
            <person name="Scott A."/>
            <person name="Cherevach I."/>
            <person name="Chillingworth T."/>
            <person name="Churcher C."/>
            <person name="Cronin A."/>
            <person name="Dowd L."/>
            <person name="Feltwell T."/>
            <person name="Hamlin N."/>
            <person name="Holroyd S."/>
            <person name="Jagels K."/>
            <person name="Moule S."/>
            <person name="Mungall K."/>
            <person name="Quail M.A."/>
            <person name="Price C."/>
            <person name="Rabbinowitsch E."/>
            <person name="Sharp S."/>
            <person name="Skelton J."/>
            <person name="Whitehead S."/>
            <person name="Barrell B.G."/>
            <person name="Kehoe M."/>
            <person name="Parkhill J."/>
        </authorList>
    </citation>
    <scope>NUCLEOTIDE SEQUENCE [LARGE SCALE GENOMIC DNA]</scope>
    <source>
        <strain>Manfredo</strain>
    </source>
</reference>
<gene>
    <name evidence="1" type="primary">pyrB</name>
    <name type="ordered locus">SpyM51166</name>
</gene>
<comment type="function">
    <text evidence="1">Catalyzes the condensation of carbamoyl phosphate and aspartate to form carbamoyl aspartate and inorganic phosphate, the committed step in the de novo pyrimidine nucleotide biosynthesis pathway.</text>
</comment>
<comment type="catalytic activity">
    <reaction evidence="1">
        <text>carbamoyl phosphate + L-aspartate = N-carbamoyl-L-aspartate + phosphate + H(+)</text>
        <dbReference type="Rhea" id="RHEA:20013"/>
        <dbReference type="ChEBI" id="CHEBI:15378"/>
        <dbReference type="ChEBI" id="CHEBI:29991"/>
        <dbReference type="ChEBI" id="CHEBI:32814"/>
        <dbReference type="ChEBI" id="CHEBI:43474"/>
        <dbReference type="ChEBI" id="CHEBI:58228"/>
        <dbReference type="EC" id="2.1.3.2"/>
    </reaction>
</comment>
<comment type="pathway">
    <text evidence="1">Pyrimidine metabolism; UMP biosynthesis via de novo pathway; (S)-dihydroorotate from bicarbonate: step 2/3.</text>
</comment>
<comment type="subunit">
    <text evidence="1">Heterododecamer (2C3:3R2) of six catalytic PyrB chains organized as two trimers (C3), and six regulatory PyrI chains organized as three dimers (R2).</text>
</comment>
<comment type="similarity">
    <text evidence="1">Belongs to the aspartate/ornithine carbamoyltransferase superfamily. ATCase family.</text>
</comment>
<evidence type="ECO:0000255" key="1">
    <source>
        <dbReference type="HAMAP-Rule" id="MF_00001"/>
    </source>
</evidence>
<keyword id="KW-0665">Pyrimidine biosynthesis</keyword>
<keyword id="KW-0808">Transferase</keyword>
<dbReference type="EC" id="2.1.3.2" evidence="1"/>
<dbReference type="EMBL" id="AM295007">
    <property type="protein sequence ID" value="CAM30491.1"/>
    <property type="molecule type" value="Genomic_DNA"/>
</dbReference>
<dbReference type="RefSeq" id="WP_004218947.1">
    <property type="nucleotide sequence ID" value="NC_009332.1"/>
</dbReference>
<dbReference type="SMR" id="A2RF62"/>
<dbReference type="KEGG" id="spf:SpyM51166"/>
<dbReference type="HOGENOM" id="CLU_043846_2_1_9"/>
<dbReference type="UniPathway" id="UPA00070">
    <property type="reaction ID" value="UER00116"/>
</dbReference>
<dbReference type="GO" id="GO:0005829">
    <property type="term" value="C:cytosol"/>
    <property type="evidence" value="ECO:0007669"/>
    <property type="project" value="TreeGrafter"/>
</dbReference>
<dbReference type="GO" id="GO:0016597">
    <property type="term" value="F:amino acid binding"/>
    <property type="evidence" value="ECO:0007669"/>
    <property type="project" value="InterPro"/>
</dbReference>
<dbReference type="GO" id="GO:0004070">
    <property type="term" value="F:aspartate carbamoyltransferase activity"/>
    <property type="evidence" value="ECO:0007669"/>
    <property type="project" value="UniProtKB-UniRule"/>
</dbReference>
<dbReference type="GO" id="GO:0006207">
    <property type="term" value="P:'de novo' pyrimidine nucleobase biosynthetic process"/>
    <property type="evidence" value="ECO:0007669"/>
    <property type="project" value="InterPro"/>
</dbReference>
<dbReference type="GO" id="GO:0044205">
    <property type="term" value="P:'de novo' UMP biosynthetic process"/>
    <property type="evidence" value="ECO:0007669"/>
    <property type="project" value="UniProtKB-UniRule"/>
</dbReference>
<dbReference type="GO" id="GO:0006520">
    <property type="term" value="P:amino acid metabolic process"/>
    <property type="evidence" value="ECO:0007669"/>
    <property type="project" value="InterPro"/>
</dbReference>
<dbReference type="FunFam" id="3.40.50.1370:FF:000011">
    <property type="entry name" value="Aspartate carbamoyltransferase"/>
    <property type="match status" value="1"/>
</dbReference>
<dbReference type="Gene3D" id="3.40.50.1370">
    <property type="entry name" value="Aspartate/ornithine carbamoyltransferase"/>
    <property type="match status" value="2"/>
</dbReference>
<dbReference type="HAMAP" id="MF_00001">
    <property type="entry name" value="Asp_carb_tr"/>
    <property type="match status" value="1"/>
</dbReference>
<dbReference type="InterPro" id="IPR006132">
    <property type="entry name" value="Asp/Orn_carbamoyltranf_P-bd"/>
</dbReference>
<dbReference type="InterPro" id="IPR006130">
    <property type="entry name" value="Asp/Orn_carbamoylTrfase"/>
</dbReference>
<dbReference type="InterPro" id="IPR036901">
    <property type="entry name" value="Asp/Orn_carbamoylTrfase_sf"/>
</dbReference>
<dbReference type="InterPro" id="IPR002082">
    <property type="entry name" value="Asp_carbamoyltransf"/>
</dbReference>
<dbReference type="InterPro" id="IPR006131">
    <property type="entry name" value="Asp_carbamoyltransf_Asp/Orn-bd"/>
</dbReference>
<dbReference type="NCBIfam" id="TIGR00670">
    <property type="entry name" value="asp_carb_tr"/>
    <property type="match status" value="1"/>
</dbReference>
<dbReference type="NCBIfam" id="NF002032">
    <property type="entry name" value="PRK00856.1"/>
    <property type="match status" value="1"/>
</dbReference>
<dbReference type="PANTHER" id="PTHR45753:SF6">
    <property type="entry name" value="ASPARTATE CARBAMOYLTRANSFERASE"/>
    <property type="match status" value="1"/>
</dbReference>
<dbReference type="PANTHER" id="PTHR45753">
    <property type="entry name" value="ORNITHINE CARBAMOYLTRANSFERASE, MITOCHONDRIAL"/>
    <property type="match status" value="1"/>
</dbReference>
<dbReference type="Pfam" id="PF00185">
    <property type="entry name" value="OTCace"/>
    <property type="match status" value="1"/>
</dbReference>
<dbReference type="Pfam" id="PF02729">
    <property type="entry name" value="OTCace_N"/>
    <property type="match status" value="1"/>
</dbReference>
<dbReference type="PRINTS" id="PR00100">
    <property type="entry name" value="AOTCASE"/>
</dbReference>
<dbReference type="PRINTS" id="PR00101">
    <property type="entry name" value="ATCASE"/>
</dbReference>
<dbReference type="SUPFAM" id="SSF53671">
    <property type="entry name" value="Aspartate/ornithine carbamoyltransferase"/>
    <property type="match status" value="1"/>
</dbReference>
<dbReference type="PROSITE" id="PS00097">
    <property type="entry name" value="CARBAMOYLTRANSFERASE"/>
    <property type="match status" value="1"/>
</dbReference>
<sequence>MSVVNNRVALTNLVSMEALTTEEVLGLINRGSEYKAGKVVISDHQKDLVANLFFENSTRTHKSFEVAEKKLGLTVLDFNADASAVNKGESLYDTVLTMSALGTDICVIRHPEDDYYKELVESPTITASIVNGGDGSGQHPSQCLLDLLTIYEEFGRFEGLKIAIAGDLTHSRVAKSNMQILKRLGAELYFYGPEEWYSEAFNAYGTYIAIDQIIKELDVLMLLRVQHERHDGHQSFSKEGYHQAFGLTQERYQQLKDSAIIMHPAPVNRDVEIADSLVEAPKARIVSQMANGVFVRMAIIEAILNGRNKNS</sequence>
<proteinExistence type="inferred from homology"/>
<feature type="chain" id="PRO_0000301628" description="Aspartate carbamoyltransferase catalytic subunit">
    <location>
        <begin position="1"/>
        <end position="311"/>
    </location>
</feature>
<feature type="binding site" evidence="1">
    <location>
        <position position="59"/>
    </location>
    <ligand>
        <name>carbamoyl phosphate</name>
        <dbReference type="ChEBI" id="CHEBI:58228"/>
    </ligand>
</feature>
<feature type="binding site" evidence="1">
    <location>
        <position position="60"/>
    </location>
    <ligand>
        <name>carbamoyl phosphate</name>
        <dbReference type="ChEBI" id="CHEBI:58228"/>
    </ligand>
</feature>
<feature type="binding site" evidence="1">
    <location>
        <position position="87"/>
    </location>
    <ligand>
        <name>L-aspartate</name>
        <dbReference type="ChEBI" id="CHEBI:29991"/>
    </ligand>
</feature>
<feature type="binding site" evidence="1">
    <location>
        <position position="109"/>
    </location>
    <ligand>
        <name>carbamoyl phosphate</name>
        <dbReference type="ChEBI" id="CHEBI:58228"/>
    </ligand>
</feature>
<feature type="binding site" evidence="1">
    <location>
        <position position="139"/>
    </location>
    <ligand>
        <name>carbamoyl phosphate</name>
        <dbReference type="ChEBI" id="CHEBI:58228"/>
    </ligand>
</feature>
<feature type="binding site" evidence="1">
    <location>
        <position position="142"/>
    </location>
    <ligand>
        <name>carbamoyl phosphate</name>
        <dbReference type="ChEBI" id="CHEBI:58228"/>
    </ligand>
</feature>
<feature type="binding site" evidence="1">
    <location>
        <position position="172"/>
    </location>
    <ligand>
        <name>L-aspartate</name>
        <dbReference type="ChEBI" id="CHEBI:29991"/>
    </ligand>
</feature>
<feature type="binding site" evidence="1">
    <location>
        <position position="224"/>
    </location>
    <ligand>
        <name>L-aspartate</name>
        <dbReference type="ChEBI" id="CHEBI:29991"/>
    </ligand>
</feature>
<feature type="binding site" evidence="1">
    <location>
        <position position="265"/>
    </location>
    <ligand>
        <name>carbamoyl phosphate</name>
        <dbReference type="ChEBI" id="CHEBI:58228"/>
    </ligand>
</feature>
<feature type="binding site" evidence="1">
    <location>
        <position position="266"/>
    </location>
    <ligand>
        <name>carbamoyl phosphate</name>
        <dbReference type="ChEBI" id="CHEBI:58228"/>
    </ligand>
</feature>
<protein>
    <recommendedName>
        <fullName evidence="1">Aspartate carbamoyltransferase catalytic subunit</fullName>
        <ecNumber evidence="1">2.1.3.2</ecNumber>
    </recommendedName>
    <alternativeName>
        <fullName evidence="1">Aspartate transcarbamylase</fullName>
        <shortName evidence="1">ATCase</shortName>
    </alternativeName>
</protein>
<organism>
    <name type="scientific">Streptococcus pyogenes serotype M5 (strain Manfredo)</name>
    <dbReference type="NCBI Taxonomy" id="160491"/>
    <lineage>
        <taxon>Bacteria</taxon>
        <taxon>Bacillati</taxon>
        <taxon>Bacillota</taxon>
        <taxon>Bacilli</taxon>
        <taxon>Lactobacillales</taxon>
        <taxon>Streptococcaceae</taxon>
        <taxon>Streptococcus</taxon>
    </lineage>
</organism>
<name>PYRB_STRPG</name>
<accession>A2RF62</accession>